<feature type="chain" id="PRO_1000116901" description="Cobyric acid synthase">
    <location>
        <begin position="1"/>
        <end position="493"/>
    </location>
</feature>
<feature type="domain" description="GATase cobBQ-type" evidence="1">
    <location>
        <begin position="246"/>
        <end position="440"/>
    </location>
</feature>
<feature type="active site" description="Nucleophile" evidence="1">
    <location>
        <position position="326"/>
    </location>
</feature>
<feature type="active site" evidence="1">
    <location>
        <position position="432"/>
    </location>
</feature>
<comment type="function">
    <text evidence="1">Catalyzes amidations at positions B, D, E, and G on adenosylcobyrinic A,C-diamide. NH(2) groups are provided by glutamine, and one molecule of ATP is hydrogenolyzed for each amidation.</text>
</comment>
<comment type="pathway">
    <text evidence="1">Cofactor biosynthesis; adenosylcobalamin biosynthesis.</text>
</comment>
<comment type="similarity">
    <text evidence="1">Belongs to the CobB/CobQ family. CobQ subfamily.</text>
</comment>
<accession>C1FVB2</accession>
<keyword id="KW-0169">Cobalamin biosynthesis</keyword>
<keyword id="KW-0315">Glutamine amidotransferase</keyword>
<sequence length="493" mass="55164">MAKIMIQGTASSVGKSLIVAALCRIFKQDGYSVCPFKSQNMSLNSYITLDGKEMGRAQVLQAYAAGLEPEVYMNPILLKPTSDKKCQIIVNGKVYGNSTAMGYHNLKLKFKNMLKGHFNKLEEDFDIVVMEGAGSPAEINLRDRDIVNMGMAELVDAPVLLVGDIDKGGVFASLAGTMLLLNEGEKKRVKGTIINKFRGDVEILKPGLDMLEDIIHIPCLGVVPYTRLQLEDEDGAVEFNKKAYAPIDIAVIKMPHISNFTDLDALKSEEDVSIRFITSKEEFKEPDLLVIPGSKNTIEDLLYLRKCGLEESIKEYSKDGKIIGICGGYQVLGSKIKDPHNVETDLGEIDGLNLLDMETTFEKEKVTTRVSAKLLNEETKNTVYGYEIHMGISKYGENIKPLFKIYDKNGEKVDYFDGAINEKGNVMGTYIHGVFDGVVFREKIINELRVKKGLKKKKSQMYEHMREKELDKLADIVRHSLDMEKIYSIIGMK</sequence>
<dbReference type="EMBL" id="CP001581">
    <property type="protein sequence ID" value="ACO83990.1"/>
    <property type="molecule type" value="Genomic_DNA"/>
</dbReference>
<dbReference type="RefSeq" id="WP_012703986.1">
    <property type="nucleotide sequence ID" value="NC_012563.1"/>
</dbReference>
<dbReference type="SMR" id="C1FVB2"/>
<dbReference type="KEGG" id="cby:CLM_1061"/>
<dbReference type="eggNOG" id="COG1492">
    <property type="taxonomic scope" value="Bacteria"/>
</dbReference>
<dbReference type="HOGENOM" id="CLU_019250_2_2_9"/>
<dbReference type="UniPathway" id="UPA00148"/>
<dbReference type="Proteomes" id="UP000001374">
    <property type="component" value="Chromosome"/>
</dbReference>
<dbReference type="GO" id="GO:0015420">
    <property type="term" value="F:ABC-type vitamin B12 transporter activity"/>
    <property type="evidence" value="ECO:0007669"/>
    <property type="project" value="UniProtKB-UniRule"/>
</dbReference>
<dbReference type="GO" id="GO:0003824">
    <property type="term" value="F:catalytic activity"/>
    <property type="evidence" value="ECO:0007669"/>
    <property type="project" value="InterPro"/>
</dbReference>
<dbReference type="GO" id="GO:0009236">
    <property type="term" value="P:cobalamin biosynthetic process"/>
    <property type="evidence" value="ECO:0007669"/>
    <property type="project" value="UniProtKB-UniRule"/>
</dbReference>
<dbReference type="CDD" id="cd05389">
    <property type="entry name" value="CobQ_N"/>
    <property type="match status" value="1"/>
</dbReference>
<dbReference type="CDD" id="cd01750">
    <property type="entry name" value="GATase1_CobQ"/>
    <property type="match status" value="1"/>
</dbReference>
<dbReference type="Gene3D" id="3.40.50.880">
    <property type="match status" value="1"/>
</dbReference>
<dbReference type="Gene3D" id="3.40.50.300">
    <property type="entry name" value="P-loop containing nucleotide triphosphate hydrolases"/>
    <property type="match status" value="1"/>
</dbReference>
<dbReference type="HAMAP" id="MF_00028">
    <property type="entry name" value="CobQ"/>
    <property type="match status" value="1"/>
</dbReference>
<dbReference type="InterPro" id="IPR029062">
    <property type="entry name" value="Class_I_gatase-like"/>
</dbReference>
<dbReference type="InterPro" id="IPR002586">
    <property type="entry name" value="CobQ/CobB/MinD/ParA_Nub-bd_dom"/>
</dbReference>
<dbReference type="InterPro" id="IPR033949">
    <property type="entry name" value="CobQ_GATase1"/>
</dbReference>
<dbReference type="InterPro" id="IPR047045">
    <property type="entry name" value="CobQ_N"/>
</dbReference>
<dbReference type="InterPro" id="IPR004459">
    <property type="entry name" value="CobQ_synth"/>
</dbReference>
<dbReference type="InterPro" id="IPR011698">
    <property type="entry name" value="GATase_3"/>
</dbReference>
<dbReference type="InterPro" id="IPR027417">
    <property type="entry name" value="P-loop_NTPase"/>
</dbReference>
<dbReference type="NCBIfam" id="TIGR00313">
    <property type="entry name" value="cobQ"/>
    <property type="match status" value="1"/>
</dbReference>
<dbReference type="NCBIfam" id="NF001989">
    <property type="entry name" value="PRK00784.1"/>
    <property type="match status" value="1"/>
</dbReference>
<dbReference type="PANTHER" id="PTHR21343:SF1">
    <property type="entry name" value="COBYRIC ACID SYNTHASE"/>
    <property type="match status" value="1"/>
</dbReference>
<dbReference type="PANTHER" id="PTHR21343">
    <property type="entry name" value="DETHIOBIOTIN SYNTHETASE"/>
    <property type="match status" value="1"/>
</dbReference>
<dbReference type="Pfam" id="PF01656">
    <property type="entry name" value="CbiA"/>
    <property type="match status" value="1"/>
</dbReference>
<dbReference type="Pfam" id="PF07685">
    <property type="entry name" value="GATase_3"/>
    <property type="match status" value="1"/>
</dbReference>
<dbReference type="SUPFAM" id="SSF52317">
    <property type="entry name" value="Class I glutamine amidotransferase-like"/>
    <property type="match status" value="1"/>
</dbReference>
<dbReference type="SUPFAM" id="SSF52540">
    <property type="entry name" value="P-loop containing nucleoside triphosphate hydrolases"/>
    <property type="match status" value="1"/>
</dbReference>
<dbReference type="PROSITE" id="PS51274">
    <property type="entry name" value="GATASE_COBBQ"/>
    <property type="match status" value="1"/>
</dbReference>
<proteinExistence type="inferred from homology"/>
<protein>
    <recommendedName>
        <fullName evidence="1">Cobyric acid synthase</fullName>
    </recommendedName>
</protein>
<organism>
    <name type="scientific">Clostridium botulinum (strain Kyoto / Type A2)</name>
    <dbReference type="NCBI Taxonomy" id="536232"/>
    <lineage>
        <taxon>Bacteria</taxon>
        <taxon>Bacillati</taxon>
        <taxon>Bacillota</taxon>
        <taxon>Clostridia</taxon>
        <taxon>Eubacteriales</taxon>
        <taxon>Clostridiaceae</taxon>
        <taxon>Clostridium</taxon>
    </lineage>
</organism>
<evidence type="ECO:0000255" key="1">
    <source>
        <dbReference type="HAMAP-Rule" id="MF_00028"/>
    </source>
</evidence>
<reference key="1">
    <citation type="submission" date="2008-10" db="EMBL/GenBank/DDBJ databases">
        <title>Genome sequence of Clostridium botulinum A2 Kyoto.</title>
        <authorList>
            <person name="Shrivastava S."/>
            <person name="Brinkac L.M."/>
            <person name="Brown J.L."/>
            <person name="Bruce D."/>
            <person name="Detter C.C."/>
            <person name="Johnson E.A."/>
            <person name="Munk C.A."/>
            <person name="Smith L.A."/>
            <person name="Smith T.J."/>
            <person name="Sutton G."/>
            <person name="Brettin T.S."/>
        </authorList>
    </citation>
    <scope>NUCLEOTIDE SEQUENCE [LARGE SCALE GENOMIC DNA]</scope>
    <source>
        <strain>Kyoto / Type A2</strain>
    </source>
</reference>
<name>COBQ_CLOBJ</name>
<gene>
    <name evidence="1" type="primary">cobQ</name>
    <name type="ordered locus">CLM_1061</name>
</gene>